<reference key="1">
    <citation type="journal article" date="1996" name="Science">
        <title>Complete genome sequence of the methanogenic archaeon, Methanococcus jannaschii.</title>
        <authorList>
            <person name="Bult C.J."/>
            <person name="White O."/>
            <person name="Olsen G.J."/>
            <person name="Zhou L."/>
            <person name="Fleischmann R.D."/>
            <person name="Sutton G.G."/>
            <person name="Blake J.A."/>
            <person name="FitzGerald L.M."/>
            <person name="Clayton R.A."/>
            <person name="Gocayne J.D."/>
            <person name="Kerlavage A.R."/>
            <person name="Dougherty B.A."/>
            <person name="Tomb J.-F."/>
            <person name="Adams M.D."/>
            <person name="Reich C.I."/>
            <person name="Overbeek R."/>
            <person name="Kirkness E.F."/>
            <person name="Weinstock K.G."/>
            <person name="Merrick J.M."/>
            <person name="Glodek A."/>
            <person name="Scott J.L."/>
            <person name="Geoghagen N.S.M."/>
            <person name="Weidman J.F."/>
            <person name="Fuhrmann J.L."/>
            <person name="Nguyen D."/>
            <person name="Utterback T.R."/>
            <person name="Kelley J.M."/>
            <person name="Peterson J.D."/>
            <person name="Sadow P.W."/>
            <person name="Hanna M.C."/>
            <person name="Cotton M.D."/>
            <person name="Roberts K.M."/>
            <person name="Hurst M.A."/>
            <person name="Kaine B.P."/>
            <person name="Borodovsky M."/>
            <person name="Klenk H.-P."/>
            <person name="Fraser C.M."/>
            <person name="Smith H.O."/>
            <person name="Woese C.R."/>
            <person name="Venter J.C."/>
        </authorList>
    </citation>
    <scope>NUCLEOTIDE SEQUENCE [LARGE SCALE GENOMIC DNA]</scope>
    <source>
        <strain>ATCC 43067 / DSM 2661 / JAL-1 / JCM 10045 / NBRC 100440</strain>
    </source>
</reference>
<feature type="chain" id="PRO_0000107114" description="Uncharacterized protein MJ0943">
    <location>
        <begin position="1"/>
        <end position="417"/>
    </location>
</feature>
<feature type="transmembrane region" description="Helical" evidence="1">
    <location>
        <begin position="10"/>
        <end position="30"/>
    </location>
</feature>
<feature type="transmembrane region" description="Helical" evidence="1">
    <location>
        <begin position="148"/>
        <end position="168"/>
    </location>
</feature>
<feature type="region of interest" description="Disordered" evidence="2">
    <location>
        <begin position="84"/>
        <end position="106"/>
    </location>
</feature>
<feature type="compositionally biased region" description="Polar residues" evidence="2">
    <location>
        <begin position="86"/>
        <end position="106"/>
    </location>
</feature>
<accession>Q58353</accession>
<organism>
    <name type="scientific">Methanocaldococcus jannaschii (strain ATCC 43067 / DSM 2661 / JAL-1 / JCM 10045 / NBRC 100440)</name>
    <name type="common">Methanococcus jannaschii</name>
    <dbReference type="NCBI Taxonomy" id="243232"/>
    <lineage>
        <taxon>Archaea</taxon>
        <taxon>Methanobacteriati</taxon>
        <taxon>Methanobacteriota</taxon>
        <taxon>Methanomada group</taxon>
        <taxon>Methanococci</taxon>
        <taxon>Methanococcales</taxon>
        <taxon>Methanocaldococcaceae</taxon>
        <taxon>Methanocaldococcus</taxon>
    </lineage>
</organism>
<dbReference type="EMBL" id="L77117">
    <property type="protein sequence ID" value="AAB98953.1"/>
    <property type="molecule type" value="Genomic_DNA"/>
</dbReference>
<dbReference type="PIR" id="G64417">
    <property type="entry name" value="G64417"/>
</dbReference>
<dbReference type="PaxDb" id="243232-MJ_0943"/>
<dbReference type="EnsemblBacteria" id="AAB98953">
    <property type="protein sequence ID" value="AAB98953"/>
    <property type="gene ID" value="MJ_0943"/>
</dbReference>
<dbReference type="KEGG" id="mja:MJ_0943"/>
<dbReference type="eggNOG" id="arCOG03788">
    <property type="taxonomic scope" value="Archaea"/>
</dbReference>
<dbReference type="HOGENOM" id="CLU_658268_0_0_2"/>
<dbReference type="InParanoid" id="Q58353"/>
<dbReference type="Proteomes" id="UP000000805">
    <property type="component" value="Chromosome"/>
</dbReference>
<dbReference type="GO" id="GO:0005886">
    <property type="term" value="C:plasma membrane"/>
    <property type="evidence" value="ECO:0007669"/>
    <property type="project" value="UniProtKB-SubCell"/>
</dbReference>
<dbReference type="Gene3D" id="2.60.40.1820">
    <property type="match status" value="1"/>
</dbReference>
<dbReference type="SUPFAM" id="SSF117070">
    <property type="entry name" value="LEA14-like"/>
    <property type="match status" value="1"/>
</dbReference>
<evidence type="ECO:0000255" key="1"/>
<evidence type="ECO:0000256" key="2">
    <source>
        <dbReference type="SAM" id="MobiDB-lite"/>
    </source>
</evidence>
<evidence type="ECO:0000305" key="3"/>
<keyword id="KW-1003">Cell membrane</keyword>
<keyword id="KW-0472">Membrane</keyword>
<keyword id="KW-1185">Reference proteome</keyword>
<keyword id="KW-0812">Transmembrane</keyword>
<keyword id="KW-1133">Transmembrane helix</keyword>
<comment type="subcellular location">
    <subcellularLocation>
        <location evidence="3">Cell membrane</location>
        <topology evidence="3">Multi-pass membrane protein</topology>
    </subcellularLocation>
</comment>
<name>Y943_METJA</name>
<proteinExistence type="predicted"/>
<sequence length="417" mass="46355">MITMDTIRKALVCFSILSILVLACGCVNTPEKIDININSNTNNGENTEKPINQENQNVNNVENKKESQSTQNIQSYENKEIKNQENHPLQSNQNYEQTNGNFNEENENAMTNVGESEVNYNNEPAYNYYIEITYPDGTIPDKIEEQMLYYIKVIDPIVGGLAGIDIYVDGNYIGTLDDVYGIVECVFYEPGYHTITAEDNGKILASKTVYVEEGTAYNSGESENYDEYDNNYESNDLQQTQTQFSEIEVYVDDIKPSNSIIITKLAMNPGFLASINGISPDIGVNIEMENGEKINLKYVSMDVDLIIDNPNSESITIDKIILNMFDDEGHSLGRGEVSNIVITPGENPVTVKVNIPINKMGYEILRKLSGEEVFAEISGSAYIEGSGEVPFSGEADLLPPLPTPPFPLPPLPPFPTE</sequence>
<protein>
    <recommendedName>
        <fullName>Uncharacterized protein MJ0943</fullName>
    </recommendedName>
</protein>
<gene>
    <name type="ordered locus">MJ0943</name>
</gene>